<gene>
    <name evidence="1" type="primary">rlmH</name>
    <name type="ordered locus">Sbal_3274</name>
</gene>
<feature type="chain" id="PRO_1000061836" description="Ribosomal RNA large subunit methyltransferase H">
    <location>
        <begin position="1"/>
        <end position="156"/>
    </location>
</feature>
<feature type="binding site" evidence="1">
    <location>
        <position position="73"/>
    </location>
    <ligand>
        <name>S-adenosyl-L-methionine</name>
        <dbReference type="ChEBI" id="CHEBI:59789"/>
    </ligand>
</feature>
<feature type="binding site" evidence="1">
    <location>
        <position position="104"/>
    </location>
    <ligand>
        <name>S-adenosyl-L-methionine</name>
        <dbReference type="ChEBI" id="CHEBI:59789"/>
    </ligand>
</feature>
<feature type="binding site" evidence="1">
    <location>
        <begin position="123"/>
        <end position="128"/>
    </location>
    <ligand>
        <name>S-adenosyl-L-methionine</name>
        <dbReference type="ChEBI" id="CHEBI:59789"/>
    </ligand>
</feature>
<reference key="1">
    <citation type="submission" date="2007-02" db="EMBL/GenBank/DDBJ databases">
        <title>Complete sequence of chromosome of Shewanella baltica OS155.</title>
        <authorList>
            <consortium name="US DOE Joint Genome Institute"/>
            <person name="Copeland A."/>
            <person name="Lucas S."/>
            <person name="Lapidus A."/>
            <person name="Barry K."/>
            <person name="Detter J.C."/>
            <person name="Glavina del Rio T."/>
            <person name="Hammon N."/>
            <person name="Israni S."/>
            <person name="Dalin E."/>
            <person name="Tice H."/>
            <person name="Pitluck S."/>
            <person name="Sims D.R."/>
            <person name="Brettin T."/>
            <person name="Bruce D."/>
            <person name="Han C."/>
            <person name="Tapia R."/>
            <person name="Brainard J."/>
            <person name="Schmutz J."/>
            <person name="Larimer F."/>
            <person name="Land M."/>
            <person name="Hauser L."/>
            <person name="Kyrpides N."/>
            <person name="Mikhailova N."/>
            <person name="Brettar I."/>
            <person name="Klappenbach J."/>
            <person name="Konstantinidis K."/>
            <person name="Rodrigues J."/>
            <person name="Tiedje J."/>
            <person name="Richardson P."/>
        </authorList>
    </citation>
    <scope>NUCLEOTIDE SEQUENCE [LARGE SCALE GENOMIC DNA]</scope>
    <source>
        <strain>OS155 / ATCC BAA-1091</strain>
    </source>
</reference>
<protein>
    <recommendedName>
        <fullName evidence="1">Ribosomal RNA large subunit methyltransferase H</fullName>
        <ecNumber evidence="1">2.1.1.177</ecNumber>
    </recommendedName>
    <alternativeName>
        <fullName evidence="1">23S rRNA (pseudouridine1915-N3)-methyltransferase</fullName>
    </alternativeName>
    <alternativeName>
        <fullName evidence="1">23S rRNA m3Psi1915 methyltransferase</fullName>
    </alternativeName>
    <alternativeName>
        <fullName evidence="1">rRNA (pseudouridine-N3-)-methyltransferase RlmH</fullName>
    </alternativeName>
</protein>
<accession>A3D7P1</accession>
<organism>
    <name type="scientific">Shewanella baltica (strain OS155 / ATCC BAA-1091)</name>
    <dbReference type="NCBI Taxonomy" id="325240"/>
    <lineage>
        <taxon>Bacteria</taxon>
        <taxon>Pseudomonadati</taxon>
        <taxon>Pseudomonadota</taxon>
        <taxon>Gammaproteobacteria</taxon>
        <taxon>Alteromonadales</taxon>
        <taxon>Shewanellaceae</taxon>
        <taxon>Shewanella</taxon>
    </lineage>
</organism>
<evidence type="ECO:0000255" key="1">
    <source>
        <dbReference type="HAMAP-Rule" id="MF_00658"/>
    </source>
</evidence>
<keyword id="KW-0963">Cytoplasm</keyword>
<keyword id="KW-0489">Methyltransferase</keyword>
<keyword id="KW-1185">Reference proteome</keyword>
<keyword id="KW-0698">rRNA processing</keyword>
<keyword id="KW-0949">S-adenosyl-L-methionine</keyword>
<keyword id="KW-0808">Transferase</keyword>
<proteinExistence type="inferred from homology"/>
<name>RLMH_SHEB5</name>
<sequence length="156" mass="17460">MKLQLIAVGTRMPDWVTRGFEEYQRRFPRDMALELIEIPAGKRGKNADIVRILQKEGEQMLAAIPKGNHIVSLDLPGKNWTTPELATALTKWQLDGRDVSLLIGGPEGLAPACKEAANQSWCLSALTLPHPLVRVVVAESLYRAWSVNTNHPYHRE</sequence>
<dbReference type="EC" id="2.1.1.177" evidence="1"/>
<dbReference type="EMBL" id="CP000563">
    <property type="protein sequence ID" value="ABN62754.1"/>
    <property type="molecule type" value="Genomic_DNA"/>
</dbReference>
<dbReference type="RefSeq" id="WP_006082752.1">
    <property type="nucleotide sequence ID" value="NC_009052.1"/>
</dbReference>
<dbReference type="SMR" id="A3D7P1"/>
<dbReference type="STRING" id="325240.Sbal_3274"/>
<dbReference type="GeneID" id="11774932"/>
<dbReference type="KEGG" id="sbl:Sbal_3274"/>
<dbReference type="HOGENOM" id="CLU_100552_1_0_6"/>
<dbReference type="OrthoDB" id="9806643at2"/>
<dbReference type="Proteomes" id="UP000001557">
    <property type="component" value="Chromosome"/>
</dbReference>
<dbReference type="GO" id="GO:0005737">
    <property type="term" value="C:cytoplasm"/>
    <property type="evidence" value="ECO:0007669"/>
    <property type="project" value="UniProtKB-SubCell"/>
</dbReference>
<dbReference type="GO" id="GO:0070038">
    <property type="term" value="F:rRNA (pseudouridine-N3-)-methyltransferase activity"/>
    <property type="evidence" value="ECO:0007669"/>
    <property type="project" value="UniProtKB-UniRule"/>
</dbReference>
<dbReference type="CDD" id="cd18081">
    <property type="entry name" value="RlmH-like"/>
    <property type="match status" value="1"/>
</dbReference>
<dbReference type="Gene3D" id="3.40.1280.10">
    <property type="match status" value="1"/>
</dbReference>
<dbReference type="HAMAP" id="MF_00658">
    <property type="entry name" value="23SrRNA_methyltr_H"/>
    <property type="match status" value="1"/>
</dbReference>
<dbReference type="InterPro" id="IPR029028">
    <property type="entry name" value="Alpha/beta_knot_MTases"/>
</dbReference>
<dbReference type="InterPro" id="IPR003742">
    <property type="entry name" value="RlmH-like"/>
</dbReference>
<dbReference type="InterPro" id="IPR029026">
    <property type="entry name" value="tRNA_m1G_MTases_N"/>
</dbReference>
<dbReference type="NCBIfam" id="NF000984">
    <property type="entry name" value="PRK00103.1-1"/>
    <property type="match status" value="1"/>
</dbReference>
<dbReference type="NCBIfam" id="NF000986">
    <property type="entry name" value="PRK00103.1-4"/>
    <property type="match status" value="1"/>
</dbReference>
<dbReference type="NCBIfam" id="TIGR00246">
    <property type="entry name" value="tRNA_RlmH_YbeA"/>
    <property type="match status" value="1"/>
</dbReference>
<dbReference type="PANTHER" id="PTHR33603">
    <property type="entry name" value="METHYLTRANSFERASE"/>
    <property type="match status" value="1"/>
</dbReference>
<dbReference type="PANTHER" id="PTHR33603:SF1">
    <property type="entry name" value="RIBOSOMAL RNA LARGE SUBUNIT METHYLTRANSFERASE H"/>
    <property type="match status" value="1"/>
</dbReference>
<dbReference type="Pfam" id="PF02590">
    <property type="entry name" value="SPOUT_MTase"/>
    <property type="match status" value="1"/>
</dbReference>
<dbReference type="PIRSF" id="PIRSF004505">
    <property type="entry name" value="MT_bac"/>
    <property type="match status" value="1"/>
</dbReference>
<dbReference type="SUPFAM" id="SSF75217">
    <property type="entry name" value="alpha/beta knot"/>
    <property type="match status" value="1"/>
</dbReference>
<comment type="function">
    <text evidence="1">Specifically methylates the pseudouridine at position 1915 (m3Psi1915) in 23S rRNA.</text>
</comment>
<comment type="catalytic activity">
    <reaction evidence="1">
        <text>pseudouridine(1915) in 23S rRNA + S-adenosyl-L-methionine = N(3)-methylpseudouridine(1915) in 23S rRNA + S-adenosyl-L-homocysteine + H(+)</text>
        <dbReference type="Rhea" id="RHEA:42752"/>
        <dbReference type="Rhea" id="RHEA-COMP:10221"/>
        <dbReference type="Rhea" id="RHEA-COMP:10222"/>
        <dbReference type="ChEBI" id="CHEBI:15378"/>
        <dbReference type="ChEBI" id="CHEBI:57856"/>
        <dbReference type="ChEBI" id="CHEBI:59789"/>
        <dbReference type="ChEBI" id="CHEBI:65314"/>
        <dbReference type="ChEBI" id="CHEBI:74486"/>
        <dbReference type="EC" id="2.1.1.177"/>
    </reaction>
</comment>
<comment type="subunit">
    <text evidence="1">Homodimer.</text>
</comment>
<comment type="subcellular location">
    <subcellularLocation>
        <location evidence="1">Cytoplasm</location>
    </subcellularLocation>
</comment>
<comment type="similarity">
    <text evidence="1">Belongs to the RNA methyltransferase RlmH family.</text>
</comment>